<keyword id="KW-0002">3D-structure</keyword>
<keyword id="KW-1003">Cell membrane</keyword>
<keyword id="KW-1015">Disulfide bond</keyword>
<keyword id="KW-0325">Glycoprotein</keyword>
<keyword id="KW-0433">Leucine-rich repeat</keyword>
<keyword id="KW-0472">Membrane</keyword>
<keyword id="KW-1185">Reference proteome</keyword>
<keyword id="KW-0677">Repeat</keyword>
<keyword id="KW-0732">Signal</keyword>
<keyword id="KW-0812">Transmembrane</keyword>
<keyword id="KW-1133">Transmembrane helix</keyword>
<accession>C3YZ59</accession>
<dbReference type="EMBL" id="GG666565">
    <property type="protein sequence ID" value="EEN54567.1"/>
    <property type="molecule type" value="Genomic_DNA"/>
</dbReference>
<dbReference type="RefSeq" id="XP_002598555.1">
    <property type="nucleotide sequence ID" value="XM_002598509.1"/>
</dbReference>
<dbReference type="PDB" id="4XSQ">
    <property type="method" value="X-ray"/>
    <property type="resolution" value="1.79 A"/>
    <property type="chains" value="A/B=21-202"/>
</dbReference>
<dbReference type="PDBsum" id="4XSQ"/>
<dbReference type="SMR" id="C3YZ59"/>
<dbReference type="FunCoup" id="C3YZ59">
    <property type="interactions" value="1"/>
</dbReference>
<dbReference type="STRING" id="7739.C3YZ59"/>
<dbReference type="eggNOG" id="KOG4237">
    <property type="taxonomic scope" value="Eukaryota"/>
</dbReference>
<dbReference type="InParanoid" id="C3YZ59"/>
<dbReference type="EvolutionaryTrace" id="C3YZ59"/>
<dbReference type="Proteomes" id="UP000001554">
    <property type="component" value="Unplaced"/>
</dbReference>
<dbReference type="GO" id="GO:0005886">
    <property type="term" value="C:plasma membrane"/>
    <property type="evidence" value="ECO:0000314"/>
    <property type="project" value="UniProtKB"/>
</dbReference>
<dbReference type="GO" id="GO:0042834">
    <property type="term" value="F:peptidoglycan binding"/>
    <property type="evidence" value="ECO:0000314"/>
    <property type="project" value="UniProtKB"/>
</dbReference>
<dbReference type="Gene3D" id="3.80.10.10">
    <property type="entry name" value="Ribonuclease Inhibitor"/>
    <property type="match status" value="1"/>
</dbReference>
<dbReference type="InterPro" id="IPR000483">
    <property type="entry name" value="Cys-rich_flank_reg_C"/>
</dbReference>
<dbReference type="InterPro" id="IPR001611">
    <property type="entry name" value="Leu-rich_rpt"/>
</dbReference>
<dbReference type="InterPro" id="IPR003591">
    <property type="entry name" value="Leu-rich_rpt_typical-subtyp"/>
</dbReference>
<dbReference type="InterPro" id="IPR032675">
    <property type="entry name" value="LRR_dom_sf"/>
</dbReference>
<dbReference type="InterPro" id="IPR000372">
    <property type="entry name" value="LRRNT"/>
</dbReference>
<dbReference type="PANTHER" id="PTHR24365:SF541">
    <property type="entry name" value="PROTEIN TOLL-RELATED"/>
    <property type="match status" value="1"/>
</dbReference>
<dbReference type="PANTHER" id="PTHR24365">
    <property type="entry name" value="TOLL-LIKE RECEPTOR"/>
    <property type="match status" value="1"/>
</dbReference>
<dbReference type="Pfam" id="PF13855">
    <property type="entry name" value="LRR_8"/>
    <property type="match status" value="1"/>
</dbReference>
<dbReference type="SMART" id="SM00369">
    <property type="entry name" value="LRR_TYP"/>
    <property type="match status" value="2"/>
</dbReference>
<dbReference type="SMART" id="SM00082">
    <property type="entry name" value="LRRCT"/>
    <property type="match status" value="1"/>
</dbReference>
<dbReference type="SMART" id="SM00013">
    <property type="entry name" value="LRRNT"/>
    <property type="match status" value="1"/>
</dbReference>
<dbReference type="SUPFAM" id="SSF52058">
    <property type="entry name" value="L domain-like"/>
    <property type="match status" value="1"/>
</dbReference>
<dbReference type="PROSITE" id="PS51450">
    <property type="entry name" value="LRR"/>
    <property type="match status" value="3"/>
</dbReference>
<feature type="signal peptide" evidence="1">
    <location>
        <begin position="1"/>
        <end position="20"/>
    </location>
</feature>
<feature type="chain" id="PRO_5002936227" description="Leucine-rich repeat-containing protein Bf66946">
    <location>
        <begin position="21"/>
        <end position="265"/>
    </location>
</feature>
<feature type="transmembrane region" description="Helical" evidence="1">
    <location>
        <begin position="220"/>
        <end position="240"/>
    </location>
</feature>
<feature type="domain" description="LRRNT" evidence="1">
    <location>
        <begin position="21"/>
        <end position="50"/>
    </location>
</feature>
<feature type="repeat" description="LRR 1" evidence="1">
    <location>
        <begin position="51"/>
        <end position="75"/>
    </location>
</feature>
<feature type="repeat" description="LRR 2" evidence="1">
    <location>
        <begin position="76"/>
        <end position="99"/>
    </location>
</feature>
<feature type="repeat" description="LRR 3" evidence="1">
    <location>
        <begin position="100"/>
        <end position="123"/>
    </location>
</feature>
<feature type="domain" description="LRRCT" evidence="1">
    <location>
        <begin position="142"/>
        <end position="193"/>
    </location>
</feature>
<feature type="glycosylation site" description="N-linked (GlcNAc...) asparagine" evidence="2">
    <location>
        <position position="64"/>
    </location>
</feature>
<feature type="disulfide bond" evidence="3 8">
    <location>
        <begin position="21"/>
        <end position="27"/>
    </location>
</feature>
<feature type="disulfide bond" evidence="3 8">
    <location>
        <begin position="25"/>
        <end position="39"/>
    </location>
</feature>
<feature type="disulfide bond" evidence="3 8">
    <location>
        <begin position="146"/>
        <end position="171"/>
    </location>
</feature>
<feature type="disulfide bond" evidence="3 8">
    <location>
        <begin position="148"/>
        <end position="192"/>
    </location>
</feature>
<feature type="mutagenesis site" description="No effect on binding to the bacteria S.aureus and S.pneumoniae." evidence="3">
    <original>YGE</original>
    <variation>AGA</variation>
    <location>
        <begin position="32"/>
        <end position="34"/>
    </location>
</feature>
<feature type="mutagenesis site" description="Abolishes binding to the bacteria S.aureus and S.pneumoniae." evidence="3">
    <original>DID</original>
    <variation>KIK</variation>
    <location>
        <begin position="105"/>
        <end position="107"/>
    </location>
</feature>
<feature type="strand" evidence="9">
    <location>
        <begin position="26"/>
        <end position="29"/>
    </location>
</feature>
<feature type="strand" evidence="9">
    <location>
        <begin position="35"/>
        <end position="38"/>
    </location>
</feature>
<feature type="strand" evidence="9">
    <location>
        <begin position="55"/>
        <end position="59"/>
    </location>
</feature>
<feature type="turn" evidence="9">
    <location>
        <begin position="70"/>
        <end position="75"/>
    </location>
</feature>
<feature type="strand" evidence="9">
    <location>
        <begin position="80"/>
        <end position="83"/>
    </location>
</feature>
<feature type="turn" evidence="9">
    <location>
        <begin position="94"/>
        <end position="99"/>
    </location>
</feature>
<feature type="strand" evidence="9">
    <location>
        <begin position="105"/>
        <end position="107"/>
    </location>
</feature>
<feature type="helix" evidence="9">
    <location>
        <begin position="118"/>
        <end position="121"/>
    </location>
</feature>
<feature type="helix" evidence="9">
    <location>
        <begin position="122"/>
        <end position="130"/>
    </location>
</feature>
<feature type="strand" evidence="9">
    <location>
        <begin position="136"/>
        <end position="138"/>
    </location>
</feature>
<feature type="helix" evidence="9">
    <location>
        <begin position="148"/>
        <end position="150"/>
    </location>
</feature>
<feature type="helix" evidence="9">
    <location>
        <begin position="151"/>
        <end position="159"/>
    </location>
</feature>
<feature type="strand" evidence="9">
    <location>
        <begin position="162"/>
        <end position="164"/>
    </location>
</feature>
<feature type="strand" evidence="9">
    <location>
        <begin position="170"/>
        <end position="174"/>
    </location>
</feature>
<feature type="helix" evidence="9">
    <location>
        <begin position="175"/>
        <end position="177"/>
    </location>
</feature>
<feature type="helix" evidence="9">
    <location>
        <begin position="182"/>
        <end position="184"/>
    </location>
</feature>
<feature type="helix" evidence="9">
    <location>
        <begin position="187"/>
        <end position="189"/>
    </location>
</feature>
<reference evidence="7" key="1">
    <citation type="journal article" date="2008" name="Nature">
        <title>The amphioxus genome and the evolution of the chordate karyotype.</title>
        <authorList>
            <person name="Putnam N.H."/>
            <person name="Butts T."/>
            <person name="Ferrier D.E.K."/>
            <person name="Furlong R.F."/>
            <person name="Hellsten U."/>
            <person name="Kawashima T."/>
            <person name="Robinson-Rechavi M."/>
            <person name="Shoguchi E."/>
            <person name="Terry A."/>
            <person name="Yu J.-K."/>
            <person name="Benito-Gutierrez E.L."/>
            <person name="Dubchak I."/>
            <person name="Garcia-Fernandez J."/>
            <person name="Gibson-Brown J.J."/>
            <person name="Grigoriev I.V."/>
            <person name="Horton A.C."/>
            <person name="de Jong P.J."/>
            <person name="Jurka J."/>
            <person name="Kapitonov V.V."/>
            <person name="Kohara Y."/>
            <person name="Kuroki Y."/>
            <person name="Lindquist E."/>
            <person name="Lucas S."/>
            <person name="Osoegawa K."/>
            <person name="Pennacchio L.A."/>
            <person name="Salamov A.A."/>
            <person name="Satou Y."/>
            <person name="Sauka-Spengler T."/>
            <person name="Schmutz J."/>
            <person name="Shin-I T."/>
            <person name="Toyoda A."/>
            <person name="Bronner-Fraser M."/>
            <person name="Fujiyama A."/>
            <person name="Holland L.Z."/>
            <person name="Holland P.W.H."/>
            <person name="Satoh N."/>
            <person name="Rokhsar D.S."/>
        </authorList>
    </citation>
    <scope>NUCLEOTIDE SEQUENCE [LARGE SCALE GENOMIC DNA]</scope>
    <source>
        <strain evidence="6">S238N-H82</strain>
        <tissue evidence="6">Testis</tissue>
    </source>
</reference>
<reference evidence="8" key="2">
    <citation type="journal article" date="2016" name="Sci. Rep.">
        <title>Structure of a variable lymphocyte receptor-like protein from the amphioxus Branchiostoma floridae.</title>
        <authorList>
            <person name="Cao D.D."/>
            <person name="Liao X."/>
            <person name="Cheng W."/>
            <person name="Jiang Y.L."/>
            <person name="Wang W.J."/>
            <person name="Li Q."/>
            <person name="Chen J.Y."/>
            <person name="Chen Y."/>
            <person name="Zhou C.Z."/>
        </authorList>
    </citation>
    <scope>X-RAY CRYSTALLOGRAPHY (1.79 ANGSTROMS) OF 21-202</scope>
    <scope>FUNCTION</scope>
    <scope>SUBCELLULAR LOCATION</scope>
    <scope>DISULFIDE BONDS</scope>
    <scope>MUTAGENESIS OF 32-TYR--GLU-34 AND 105-ASP--ASP-107</scope>
</reference>
<protein>
    <recommendedName>
        <fullName evidence="4">Leucine-rich repeat-containing protein Bf66946</fullName>
    </recommendedName>
</protein>
<gene>
    <name evidence="6" type="ORF">BRAFLDRAFT_66946</name>
</gene>
<sequence length="265" mass="29133">MALRDIFLLSMAMTAVTVQACPSACKCTVSLYGEMVVACGGMGLTEIPEDIPHRAVYLVLKDNNITKITSYSFKGLRNLQGIDLSNNKINHISSAALRHLGHLDDIDLSRNELTSVSEKLFDFPISSAKAQGRRFFVYLANNPWGCDCRMAWLAQELAGGSKTFGDRHMECATPAALAGRGLSEIPQTSFVCTGRDISFDSDGIIATPEESTAFPVAYKVAVVFGCITGLVTILLLVLTAMLYQKRRIRLGSKYELRWNKHPEFV</sequence>
<name>LRRCB_BRAFL</name>
<organism evidence="7">
    <name type="scientific">Branchiostoma floridae</name>
    <name type="common">Florida lancelet</name>
    <name type="synonym">Amphioxus</name>
    <dbReference type="NCBI Taxonomy" id="7739"/>
    <lineage>
        <taxon>Eukaryota</taxon>
        <taxon>Metazoa</taxon>
        <taxon>Chordata</taxon>
        <taxon>Cephalochordata</taxon>
        <taxon>Leptocardii</taxon>
        <taxon>Amphioxiformes</taxon>
        <taxon>Branchiostomatidae</taxon>
        <taxon>Branchiostoma</taxon>
    </lineage>
</organism>
<comment type="function">
    <text evidence="3">Binds selectively to the Gram-positive bacteria S.aureus and S.pneumoniae. Does not adhere to the Gram-negative bacteria E.coli and S.enterica. Probably recognizes peptidoglycans expressed on the bacterial cell surface.</text>
</comment>
<comment type="subcellular location">
    <subcellularLocation>
        <location evidence="5">Cell membrane</location>
        <topology evidence="1">Single-pass type I membrane protein</topology>
    </subcellularLocation>
</comment>
<proteinExistence type="evidence at protein level"/>
<evidence type="ECO:0000255" key="1"/>
<evidence type="ECO:0000255" key="2">
    <source>
        <dbReference type="PROSITE-ProRule" id="PRU00498"/>
    </source>
</evidence>
<evidence type="ECO:0000269" key="3">
    <source>
    </source>
</evidence>
<evidence type="ECO:0000305" key="4"/>
<evidence type="ECO:0000305" key="5">
    <source>
    </source>
</evidence>
<evidence type="ECO:0000312" key="6">
    <source>
        <dbReference type="EMBL" id="EEN54567.1"/>
    </source>
</evidence>
<evidence type="ECO:0000312" key="7">
    <source>
        <dbReference type="Proteomes" id="UP000001554"/>
    </source>
</evidence>
<evidence type="ECO:0007744" key="8">
    <source>
        <dbReference type="PDB" id="4XSQ"/>
    </source>
</evidence>
<evidence type="ECO:0007829" key="9">
    <source>
        <dbReference type="PDB" id="4XSQ"/>
    </source>
</evidence>